<gene>
    <name evidence="1" type="primary">hcaB</name>
    <name type="ordered locus">SBO_2565</name>
</gene>
<proteinExistence type="inferred from homology"/>
<feature type="chain" id="PRO_0000333764" description="3-phenylpropionate-dihydrodiol/cinnamic acid-dihydrodiol dehydrogenase">
    <location>
        <begin position="1"/>
        <end position="270"/>
    </location>
</feature>
<feature type="active site" description="Proton acceptor" evidence="1">
    <location>
        <position position="156"/>
    </location>
</feature>
<feature type="binding site" evidence="1">
    <location>
        <begin position="10"/>
        <end position="34"/>
    </location>
    <ligand>
        <name>NAD(+)</name>
        <dbReference type="ChEBI" id="CHEBI:57540"/>
    </ligand>
</feature>
<feature type="binding site" evidence="1">
    <location>
        <position position="143"/>
    </location>
    <ligand>
        <name>substrate</name>
    </ligand>
</feature>
<keyword id="KW-0058">Aromatic hydrocarbons catabolism</keyword>
<keyword id="KW-0520">NAD</keyword>
<keyword id="KW-0560">Oxidoreductase</keyword>
<sequence>MSDLHNESIFITGGGSGLGLALVERFIEEGAQVATLELSAAKVASLRQRFGEHILAVEGNVTCYADYQRAVDQILTRSGKLDCFIGNAGIWDHNASLVNTPAETLETGFHELFNVNVLGYLLGAKACAPALIASEGSMIFTLSNAAWYPGGGGPLYTASKHAATGLIRQLAYELAPKVRVNGVGPCGMASDLRGPQALGQSETSIMQSLTPEKIAAILPLQFFPQPADFTGPYVMLASRRNNRALSGVMINADAGLAIRGIRHVAAGLDL</sequence>
<protein>
    <recommendedName>
        <fullName evidence="1">3-phenylpropionate-dihydrodiol/cinnamic acid-dihydrodiol dehydrogenase</fullName>
        <ecNumber evidence="1">1.3.1.87</ecNumber>
    </recommendedName>
    <alternativeName>
        <fullName evidence="1">2,3-dihydroxy-2,3-dihydrophenylpropionate dehydrogenase</fullName>
    </alternativeName>
    <alternativeName>
        <fullName evidence="1">3-(cis-5,6-dihydroxycyclohexa-1,3-dien-1-yl)propanoate dehydrogenase</fullName>
    </alternativeName>
    <alternativeName>
        <fullName evidence="1">CI-dihydrodiol dehydrogenase</fullName>
    </alternativeName>
    <alternativeName>
        <fullName evidence="1">Cis-3-(2-carboxyethenyl)-3,5-cyclohexadiene-1,2-diol dehydrogenase</fullName>
    </alternativeName>
    <alternativeName>
        <fullName evidence="1">Cis-3-(2-carboxyethyl)-3,5-cyclohexadiene-1,2-diol dehydrogenase</fullName>
    </alternativeName>
    <alternativeName>
        <fullName evidence="1">PP-dihydrodiol dehydrogenase</fullName>
    </alternativeName>
</protein>
<organism>
    <name type="scientific">Shigella boydii serotype 4 (strain Sb227)</name>
    <dbReference type="NCBI Taxonomy" id="300268"/>
    <lineage>
        <taxon>Bacteria</taxon>
        <taxon>Pseudomonadati</taxon>
        <taxon>Pseudomonadota</taxon>
        <taxon>Gammaproteobacteria</taxon>
        <taxon>Enterobacterales</taxon>
        <taxon>Enterobacteriaceae</taxon>
        <taxon>Shigella</taxon>
    </lineage>
</organism>
<evidence type="ECO:0000255" key="1">
    <source>
        <dbReference type="HAMAP-Rule" id="MF_01647"/>
    </source>
</evidence>
<name>HCAB_SHIBS</name>
<dbReference type="EC" id="1.3.1.87" evidence="1"/>
<dbReference type="EMBL" id="CP000036">
    <property type="protein sequence ID" value="ABB67109.1"/>
    <property type="molecule type" value="Genomic_DNA"/>
</dbReference>
<dbReference type="RefSeq" id="WP_001281377.1">
    <property type="nucleotide sequence ID" value="NC_007613.1"/>
</dbReference>
<dbReference type="SMR" id="Q31XU9"/>
<dbReference type="GeneID" id="75206234"/>
<dbReference type="KEGG" id="sbo:SBO_2565"/>
<dbReference type="HOGENOM" id="CLU_010194_1_0_6"/>
<dbReference type="UniPathway" id="UPA00714"/>
<dbReference type="Proteomes" id="UP000007067">
    <property type="component" value="Chromosome"/>
</dbReference>
<dbReference type="GO" id="GO:0018498">
    <property type="term" value="F:2,3-dihydroxy-2,3-dihydro-phenylpropionate dehydrogenase activity"/>
    <property type="evidence" value="ECO:0007669"/>
    <property type="project" value="UniProtKB-UniRule"/>
</dbReference>
<dbReference type="GO" id="GO:0019380">
    <property type="term" value="P:3-phenylpropionate catabolic process"/>
    <property type="evidence" value="ECO:0007669"/>
    <property type="project" value="UniProtKB-UniRule"/>
</dbReference>
<dbReference type="CDD" id="cd05348">
    <property type="entry name" value="BphB-like_SDR_c"/>
    <property type="match status" value="1"/>
</dbReference>
<dbReference type="FunFam" id="3.40.50.720:FF:000151">
    <property type="entry name" value="3-phenylpropionate-dihydrodiol/cinnamic acid-dihydrodiol dehydrogenase"/>
    <property type="match status" value="1"/>
</dbReference>
<dbReference type="Gene3D" id="3.40.50.720">
    <property type="entry name" value="NAD(P)-binding Rossmann-like Domain"/>
    <property type="match status" value="1"/>
</dbReference>
<dbReference type="HAMAP" id="MF_01647">
    <property type="entry name" value="HcaB"/>
    <property type="match status" value="1"/>
</dbReference>
<dbReference type="InterPro" id="IPR047950">
    <property type="entry name" value="BphB-like_SDR"/>
</dbReference>
<dbReference type="InterPro" id="IPR023643">
    <property type="entry name" value="Dihydrodiol_DH_HcaB"/>
</dbReference>
<dbReference type="InterPro" id="IPR036291">
    <property type="entry name" value="NAD(P)-bd_dom_sf"/>
</dbReference>
<dbReference type="InterPro" id="IPR020904">
    <property type="entry name" value="Sc_DH/Rdtase_CS"/>
</dbReference>
<dbReference type="InterPro" id="IPR002347">
    <property type="entry name" value="SDR_fam"/>
</dbReference>
<dbReference type="NCBIfam" id="NF042950">
    <property type="entry name" value="3PPDhyd_Dh_HcaB"/>
    <property type="match status" value="1"/>
</dbReference>
<dbReference type="NCBIfam" id="NF004849">
    <property type="entry name" value="PRK06200.1"/>
    <property type="match status" value="1"/>
</dbReference>
<dbReference type="PANTHER" id="PTHR43943:SF17">
    <property type="entry name" value="3-PHENYLPROPIONATE-DIHYDRODIOL_CINNAMIC ACID-DIHYDRODIOL DEHYDROGENASE"/>
    <property type="match status" value="1"/>
</dbReference>
<dbReference type="PANTHER" id="PTHR43943">
    <property type="entry name" value="DEHYDROGENASE/REDUCTASE (SDR FAMILY) MEMBER 4"/>
    <property type="match status" value="1"/>
</dbReference>
<dbReference type="Pfam" id="PF00106">
    <property type="entry name" value="adh_short"/>
    <property type="match status" value="1"/>
</dbReference>
<dbReference type="PRINTS" id="PR00081">
    <property type="entry name" value="GDHRDH"/>
</dbReference>
<dbReference type="PRINTS" id="PR00080">
    <property type="entry name" value="SDRFAMILY"/>
</dbReference>
<dbReference type="SUPFAM" id="SSF51735">
    <property type="entry name" value="NAD(P)-binding Rossmann-fold domains"/>
    <property type="match status" value="1"/>
</dbReference>
<dbReference type="PROSITE" id="PS00061">
    <property type="entry name" value="ADH_SHORT"/>
    <property type="match status" value="1"/>
</dbReference>
<comment type="function">
    <text evidence="1">Converts 3-phenylpropionate-dihydrodiol (PP-dihydrodiol) and cinnamic acid-dihydrodiol (CI-dihydrodiol) into 3-(2,3-dihydroxylphenyl)propanoic acid (DHPP) and 2,3-dihydroxicinnamic acid (DHCI), respectively.</text>
</comment>
<comment type="catalytic activity">
    <reaction evidence="1">
        <text>3-(cis-5,6-dihydroxycyclohexa-1,3-dien-1-yl)propanoate + NAD(+) = 3-(2,3-dihydroxyphenyl)propanoate + NADH + H(+)</text>
        <dbReference type="Rhea" id="RHEA:25062"/>
        <dbReference type="ChEBI" id="CHEBI:15378"/>
        <dbReference type="ChEBI" id="CHEBI:46951"/>
        <dbReference type="ChEBI" id="CHEBI:57540"/>
        <dbReference type="ChEBI" id="CHEBI:57945"/>
        <dbReference type="ChEBI" id="CHEBI:60087"/>
        <dbReference type="EC" id="1.3.1.87"/>
    </reaction>
</comment>
<comment type="catalytic activity">
    <reaction evidence="1">
        <text>(2E)-3-(cis-5,6-dihydroxycyclohexa-1,3-dien-1-yl)prop-2-enoate + NAD(+) = (2E)-3-(2,3-dihydroxyphenyl)prop-2-enoate + NADH + H(+)</text>
        <dbReference type="Rhea" id="RHEA:25066"/>
        <dbReference type="ChEBI" id="CHEBI:15378"/>
        <dbReference type="ChEBI" id="CHEBI:57540"/>
        <dbReference type="ChEBI" id="CHEBI:57945"/>
        <dbReference type="ChEBI" id="CHEBI:58642"/>
        <dbReference type="ChEBI" id="CHEBI:61451"/>
        <dbReference type="EC" id="1.3.1.87"/>
    </reaction>
</comment>
<comment type="pathway">
    <text evidence="1">Aromatic compound metabolism; 3-phenylpropanoate degradation.</text>
</comment>
<comment type="similarity">
    <text evidence="1">Belongs to the short-chain dehydrogenases/reductases (SDR) family.</text>
</comment>
<reference key="1">
    <citation type="journal article" date="2005" name="Nucleic Acids Res.">
        <title>Genome dynamics and diversity of Shigella species, the etiologic agents of bacillary dysentery.</title>
        <authorList>
            <person name="Yang F."/>
            <person name="Yang J."/>
            <person name="Zhang X."/>
            <person name="Chen L."/>
            <person name="Jiang Y."/>
            <person name="Yan Y."/>
            <person name="Tang X."/>
            <person name="Wang J."/>
            <person name="Xiong Z."/>
            <person name="Dong J."/>
            <person name="Xue Y."/>
            <person name="Zhu Y."/>
            <person name="Xu X."/>
            <person name="Sun L."/>
            <person name="Chen S."/>
            <person name="Nie H."/>
            <person name="Peng J."/>
            <person name="Xu J."/>
            <person name="Wang Y."/>
            <person name="Yuan Z."/>
            <person name="Wen Y."/>
            <person name="Yao Z."/>
            <person name="Shen Y."/>
            <person name="Qiang B."/>
            <person name="Hou Y."/>
            <person name="Yu J."/>
            <person name="Jin Q."/>
        </authorList>
    </citation>
    <scope>NUCLEOTIDE SEQUENCE [LARGE SCALE GENOMIC DNA]</scope>
    <source>
        <strain>Sb227</strain>
    </source>
</reference>
<accession>Q31XU9</accession>